<proteinExistence type="inferred from homology"/>
<organism>
    <name type="scientific">Pasteurella multocida (strain Pm70)</name>
    <dbReference type="NCBI Taxonomy" id="272843"/>
    <lineage>
        <taxon>Bacteria</taxon>
        <taxon>Pseudomonadati</taxon>
        <taxon>Pseudomonadota</taxon>
        <taxon>Gammaproteobacteria</taxon>
        <taxon>Pasteurellales</taxon>
        <taxon>Pasteurellaceae</taxon>
        <taxon>Pasteurella</taxon>
    </lineage>
</organism>
<name>Y1869_PASMU</name>
<evidence type="ECO:0000255" key="1">
    <source>
        <dbReference type="HAMAP-Rule" id="MF_00758"/>
    </source>
</evidence>
<gene>
    <name type="ordered locus">PM1869</name>
</gene>
<sequence length="186" mass="20961">MMELQDHFLIAMPQMEDDYFAHSVVYICEHNDQGTMGLVLNQPTDLSIAELCAKMNFMMKTDRTYGNDLVLAGGPVNIERGFILHTKTAQTFKHSYKVTDQLSLTTSADIIDTFGTAQAPEKYLVALGCASWTVNQLESEIANNDWLVVPANNRILFDVPYEDRWLEANLLLGIQHHNFAHQAGHC</sequence>
<reference key="1">
    <citation type="journal article" date="2001" name="Proc. Natl. Acad. Sci. U.S.A.">
        <title>Complete genomic sequence of Pasteurella multocida Pm70.</title>
        <authorList>
            <person name="May B.J."/>
            <person name="Zhang Q."/>
            <person name="Li L.L."/>
            <person name="Paustian M.L."/>
            <person name="Whittam T.S."/>
            <person name="Kapur V."/>
        </authorList>
    </citation>
    <scope>NUCLEOTIDE SEQUENCE [LARGE SCALE GENOMIC DNA]</scope>
    <source>
        <strain>Pm70</strain>
    </source>
</reference>
<comment type="similarity">
    <text evidence="1">Belongs to the UPF0301 (AlgH) family.</text>
</comment>
<dbReference type="EMBL" id="AE004439">
    <property type="protein sequence ID" value="AAK03953.1"/>
    <property type="molecule type" value="Genomic_DNA"/>
</dbReference>
<dbReference type="SMR" id="Q9CJX1"/>
<dbReference type="STRING" id="272843.PM1869"/>
<dbReference type="EnsemblBacteria" id="AAK03953">
    <property type="protein sequence ID" value="AAK03953"/>
    <property type="gene ID" value="PM1869"/>
</dbReference>
<dbReference type="KEGG" id="pmu:PM1869"/>
<dbReference type="HOGENOM" id="CLU_057596_1_0_6"/>
<dbReference type="Proteomes" id="UP000000809">
    <property type="component" value="Chromosome"/>
</dbReference>
<dbReference type="GO" id="GO:0005829">
    <property type="term" value="C:cytosol"/>
    <property type="evidence" value="ECO:0007669"/>
    <property type="project" value="TreeGrafter"/>
</dbReference>
<dbReference type="Gene3D" id="3.40.1740.10">
    <property type="entry name" value="VC0467-like"/>
    <property type="match status" value="1"/>
</dbReference>
<dbReference type="HAMAP" id="MF_00758">
    <property type="entry name" value="UPF0301"/>
    <property type="match status" value="1"/>
</dbReference>
<dbReference type="InterPro" id="IPR003774">
    <property type="entry name" value="AlgH-like"/>
</dbReference>
<dbReference type="NCBIfam" id="NF001266">
    <property type="entry name" value="PRK00228.1-1"/>
    <property type="match status" value="1"/>
</dbReference>
<dbReference type="PANTHER" id="PTHR30327">
    <property type="entry name" value="UNCHARACTERIZED PROTEIN YQGE"/>
    <property type="match status" value="1"/>
</dbReference>
<dbReference type="PANTHER" id="PTHR30327:SF1">
    <property type="entry name" value="UPF0301 PROTEIN YQGE"/>
    <property type="match status" value="1"/>
</dbReference>
<dbReference type="Pfam" id="PF02622">
    <property type="entry name" value="DUF179"/>
    <property type="match status" value="1"/>
</dbReference>
<dbReference type="SUPFAM" id="SSF143456">
    <property type="entry name" value="VC0467-like"/>
    <property type="match status" value="1"/>
</dbReference>
<protein>
    <recommendedName>
        <fullName evidence="1">UPF0301 protein PM1869</fullName>
    </recommendedName>
</protein>
<accession>Q9CJX1</accession>
<keyword id="KW-1185">Reference proteome</keyword>
<feature type="chain" id="PRO_0000214334" description="UPF0301 protein PM1869">
    <location>
        <begin position="1"/>
        <end position="186"/>
    </location>
</feature>